<accession>Q084R8</accession>
<comment type="function">
    <text evidence="1">Formation of pseudouridine at positions 38, 39 and 40 in the anticodon stem and loop of transfer RNAs.</text>
</comment>
<comment type="catalytic activity">
    <reaction evidence="1">
        <text>uridine(38/39/40) in tRNA = pseudouridine(38/39/40) in tRNA</text>
        <dbReference type="Rhea" id="RHEA:22376"/>
        <dbReference type="Rhea" id="RHEA-COMP:10085"/>
        <dbReference type="Rhea" id="RHEA-COMP:10087"/>
        <dbReference type="ChEBI" id="CHEBI:65314"/>
        <dbReference type="ChEBI" id="CHEBI:65315"/>
        <dbReference type="EC" id="5.4.99.12"/>
    </reaction>
</comment>
<comment type="subunit">
    <text evidence="1">Homodimer.</text>
</comment>
<comment type="similarity">
    <text evidence="1">Belongs to the tRNA pseudouridine synthase TruA family.</text>
</comment>
<evidence type="ECO:0000255" key="1">
    <source>
        <dbReference type="HAMAP-Rule" id="MF_00171"/>
    </source>
</evidence>
<sequence length="261" mass="29334">MRVALGIEYDGSSFCGWQRQLEVDSVQAQIEKALSYVANEPITVSCAGRTDTGVHGTGQVVHFDTDVQRPMTAWTQGVNANLPDSVAIRWAKEVDDSFHARYSATARRYRYVIYNHKLRPGILSAGVSHYHGDIDETLMHKAAQLFVGEHDFTSFRALHCQSKTPFRNVHQVNVTRQGMYVMVDIQANAFLHHMVRNIVGSLLQIGLGNQPIEWITELFALKNRKLAAPTAKPNGLYLVDVTYPEHYQLPKLALGPLFMLD</sequence>
<keyword id="KW-0413">Isomerase</keyword>
<keyword id="KW-1185">Reference proteome</keyword>
<keyword id="KW-0819">tRNA processing</keyword>
<dbReference type="EC" id="5.4.99.12" evidence="1"/>
<dbReference type="EMBL" id="CP000447">
    <property type="protein sequence ID" value="ABI71247.1"/>
    <property type="molecule type" value="Genomic_DNA"/>
</dbReference>
<dbReference type="RefSeq" id="WP_011636868.1">
    <property type="nucleotide sequence ID" value="NC_008345.1"/>
</dbReference>
<dbReference type="SMR" id="Q084R8"/>
<dbReference type="STRING" id="318167.Sfri_1395"/>
<dbReference type="KEGG" id="sfr:Sfri_1395"/>
<dbReference type="eggNOG" id="COG0101">
    <property type="taxonomic scope" value="Bacteria"/>
</dbReference>
<dbReference type="HOGENOM" id="CLU_014673_0_2_6"/>
<dbReference type="OrthoDB" id="9811823at2"/>
<dbReference type="Proteomes" id="UP000000684">
    <property type="component" value="Chromosome"/>
</dbReference>
<dbReference type="GO" id="GO:0003723">
    <property type="term" value="F:RNA binding"/>
    <property type="evidence" value="ECO:0007669"/>
    <property type="project" value="InterPro"/>
</dbReference>
<dbReference type="GO" id="GO:0160147">
    <property type="term" value="F:tRNA pseudouridine(38-40) synthase activity"/>
    <property type="evidence" value="ECO:0007669"/>
    <property type="project" value="UniProtKB-EC"/>
</dbReference>
<dbReference type="GO" id="GO:0031119">
    <property type="term" value="P:tRNA pseudouridine synthesis"/>
    <property type="evidence" value="ECO:0007669"/>
    <property type="project" value="UniProtKB-UniRule"/>
</dbReference>
<dbReference type="CDD" id="cd02570">
    <property type="entry name" value="PseudoU_synth_EcTruA"/>
    <property type="match status" value="1"/>
</dbReference>
<dbReference type="FunFam" id="3.30.70.580:FF:000001">
    <property type="entry name" value="tRNA pseudouridine synthase A"/>
    <property type="match status" value="1"/>
</dbReference>
<dbReference type="FunFam" id="3.30.70.660:FF:000001">
    <property type="entry name" value="tRNA pseudouridine synthase A"/>
    <property type="match status" value="1"/>
</dbReference>
<dbReference type="Gene3D" id="3.30.70.660">
    <property type="entry name" value="Pseudouridine synthase I, catalytic domain, C-terminal subdomain"/>
    <property type="match status" value="1"/>
</dbReference>
<dbReference type="Gene3D" id="3.30.70.580">
    <property type="entry name" value="Pseudouridine synthase I, catalytic domain, N-terminal subdomain"/>
    <property type="match status" value="1"/>
</dbReference>
<dbReference type="HAMAP" id="MF_00171">
    <property type="entry name" value="TruA"/>
    <property type="match status" value="1"/>
</dbReference>
<dbReference type="InterPro" id="IPR020103">
    <property type="entry name" value="PsdUridine_synth_cat_dom_sf"/>
</dbReference>
<dbReference type="InterPro" id="IPR001406">
    <property type="entry name" value="PsdUridine_synth_TruA"/>
</dbReference>
<dbReference type="InterPro" id="IPR020097">
    <property type="entry name" value="PsdUridine_synth_TruA_a/b_dom"/>
</dbReference>
<dbReference type="InterPro" id="IPR020095">
    <property type="entry name" value="PsdUridine_synth_TruA_C"/>
</dbReference>
<dbReference type="InterPro" id="IPR020094">
    <property type="entry name" value="TruA/RsuA/RluB/E/F_N"/>
</dbReference>
<dbReference type="NCBIfam" id="TIGR00071">
    <property type="entry name" value="hisT_truA"/>
    <property type="match status" value="1"/>
</dbReference>
<dbReference type="PANTHER" id="PTHR11142">
    <property type="entry name" value="PSEUDOURIDYLATE SYNTHASE"/>
    <property type="match status" value="1"/>
</dbReference>
<dbReference type="PANTHER" id="PTHR11142:SF0">
    <property type="entry name" value="TRNA PSEUDOURIDINE SYNTHASE-LIKE 1"/>
    <property type="match status" value="1"/>
</dbReference>
<dbReference type="Pfam" id="PF01416">
    <property type="entry name" value="PseudoU_synth_1"/>
    <property type="match status" value="2"/>
</dbReference>
<dbReference type="PIRSF" id="PIRSF001430">
    <property type="entry name" value="tRNA_psdUrid_synth"/>
    <property type="match status" value="1"/>
</dbReference>
<dbReference type="SUPFAM" id="SSF55120">
    <property type="entry name" value="Pseudouridine synthase"/>
    <property type="match status" value="1"/>
</dbReference>
<gene>
    <name evidence="1" type="primary">truA</name>
    <name type="ordered locus">Sfri_1395</name>
</gene>
<feature type="chain" id="PRO_1000017168" description="tRNA pseudouridine synthase A">
    <location>
        <begin position="1"/>
        <end position="261"/>
    </location>
</feature>
<feature type="active site" description="Nucleophile" evidence="1">
    <location>
        <position position="51"/>
    </location>
</feature>
<feature type="binding site" evidence="1">
    <location>
        <position position="109"/>
    </location>
    <ligand>
        <name>substrate</name>
    </ligand>
</feature>
<protein>
    <recommendedName>
        <fullName evidence="1">tRNA pseudouridine synthase A</fullName>
        <ecNumber evidence="1">5.4.99.12</ecNumber>
    </recommendedName>
    <alternativeName>
        <fullName evidence="1">tRNA pseudouridine(38-40) synthase</fullName>
    </alternativeName>
    <alternativeName>
        <fullName evidence="1">tRNA pseudouridylate synthase I</fullName>
    </alternativeName>
    <alternativeName>
        <fullName evidence="1">tRNA-uridine isomerase I</fullName>
    </alternativeName>
</protein>
<proteinExistence type="inferred from homology"/>
<name>TRUA_SHEFN</name>
<organism>
    <name type="scientific">Shewanella frigidimarina (strain NCIMB 400)</name>
    <dbReference type="NCBI Taxonomy" id="318167"/>
    <lineage>
        <taxon>Bacteria</taxon>
        <taxon>Pseudomonadati</taxon>
        <taxon>Pseudomonadota</taxon>
        <taxon>Gammaproteobacteria</taxon>
        <taxon>Alteromonadales</taxon>
        <taxon>Shewanellaceae</taxon>
        <taxon>Shewanella</taxon>
    </lineage>
</organism>
<reference key="1">
    <citation type="submission" date="2006-08" db="EMBL/GenBank/DDBJ databases">
        <title>Complete sequence of Shewanella frigidimarina NCIMB 400.</title>
        <authorList>
            <consortium name="US DOE Joint Genome Institute"/>
            <person name="Copeland A."/>
            <person name="Lucas S."/>
            <person name="Lapidus A."/>
            <person name="Barry K."/>
            <person name="Detter J.C."/>
            <person name="Glavina del Rio T."/>
            <person name="Hammon N."/>
            <person name="Israni S."/>
            <person name="Dalin E."/>
            <person name="Tice H."/>
            <person name="Pitluck S."/>
            <person name="Fredrickson J.K."/>
            <person name="Kolker E."/>
            <person name="McCuel L.A."/>
            <person name="DiChristina T."/>
            <person name="Nealson K.H."/>
            <person name="Newman D."/>
            <person name="Tiedje J.M."/>
            <person name="Zhou J."/>
            <person name="Romine M.F."/>
            <person name="Culley D.E."/>
            <person name="Serres M."/>
            <person name="Chertkov O."/>
            <person name="Brettin T."/>
            <person name="Bruce D."/>
            <person name="Han C."/>
            <person name="Tapia R."/>
            <person name="Gilna P."/>
            <person name="Schmutz J."/>
            <person name="Larimer F."/>
            <person name="Land M."/>
            <person name="Hauser L."/>
            <person name="Kyrpides N."/>
            <person name="Mikhailova N."/>
            <person name="Richardson P."/>
        </authorList>
    </citation>
    <scope>NUCLEOTIDE SEQUENCE [LARGE SCALE GENOMIC DNA]</scope>
    <source>
        <strain>NCIMB 400</strain>
    </source>
</reference>